<reference key="1">
    <citation type="journal article" date="1994" name="EMBO J.">
        <title>Complete DNA sequence of yeast chromosome II.</title>
        <authorList>
            <person name="Feldmann H."/>
            <person name="Aigle M."/>
            <person name="Aljinovic G."/>
            <person name="Andre B."/>
            <person name="Baclet M.C."/>
            <person name="Barthe C."/>
            <person name="Baur A."/>
            <person name="Becam A.-M."/>
            <person name="Biteau N."/>
            <person name="Boles E."/>
            <person name="Brandt T."/>
            <person name="Brendel M."/>
            <person name="Brueckner M."/>
            <person name="Bussereau F."/>
            <person name="Christiansen C."/>
            <person name="Contreras R."/>
            <person name="Crouzet M."/>
            <person name="Cziepluch C."/>
            <person name="Demolis N."/>
            <person name="Delaveau T."/>
            <person name="Doignon F."/>
            <person name="Domdey H."/>
            <person name="Duesterhus S."/>
            <person name="Dubois E."/>
            <person name="Dujon B."/>
            <person name="El Bakkoury M."/>
            <person name="Entian K.-D."/>
            <person name="Feuermann M."/>
            <person name="Fiers W."/>
            <person name="Fobo G.M."/>
            <person name="Fritz C."/>
            <person name="Gassenhuber J."/>
            <person name="Glansdorff N."/>
            <person name="Goffeau A."/>
            <person name="Grivell L.A."/>
            <person name="de Haan M."/>
            <person name="Hein C."/>
            <person name="Herbert C.J."/>
            <person name="Hollenberg C.P."/>
            <person name="Holmstroem K."/>
            <person name="Jacq C."/>
            <person name="Jacquet M."/>
            <person name="Jauniaux J.-C."/>
            <person name="Jonniaux J.-L."/>
            <person name="Kallesoee T."/>
            <person name="Kiesau P."/>
            <person name="Kirchrath L."/>
            <person name="Koetter P."/>
            <person name="Korol S."/>
            <person name="Liebl S."/>
            <person name="Logghe M."/>
            <person name="Lohan A.J.E."/>
            <person name="Louis E.J."/>
            <person name="Li Z.Y."/>
            <person name="Maat M.J."/>
            <person name="Mallet L."/>
            <person name="Mannhaupt G."/>
            <person name="Messenguy F."/>
            <person name="Miosga T."/>
            <person name="Molemans F."/>
            <person name="Mueller S."/>
            <person name="Nasr F."/>
            <person name="Obermaier B."/>
            <person name="Perea J."/>
            <person name="Pierard A."/>
            <person name="Piravandi E."/>
            <person name="Pohl F.M."/>
            <person name="Pohl T.M."/>
            <person name="Potier S."/>
            <person name="Proft M."/>
            <person name="Purnelle B."/>
            <person name="Ramezani Rad M."/>
            <person name="Rieger M."/>
            <person name="Rose M."/>
            <person name="Schaaff-Gerstenschlaeger I."/>
            <person name="Scherens B."/>
            <person name="Schwarzlose C."/>
            <person name="Skala J."/>
            <person name="Slonimski P.P."/>
            <person name="Smits P.H.M."/>
            <person name="Souciet J.-L."/>
            <person name="Steensma H.Y."/>
            <person name="Stucka R."/>
            <person name="Urrestarazu L.A."/>
            <person name="van der Aart Q.J.M."/>
            <person name="Van Dyck L."/>
            <person name="Vassarotti A."/>
            <person name="Vetter I."/>
            <person name="Vierendeels F."/>
            <person name="Vissers S."/>
            <person name="Wagner G."/>
            <person name="de Wergifosse P."/>
            <person name="Wolfe K.H."/>
            <person name="Zagulski M."/>
            <person name="Zimmermann F.K."/>
            <person name="Mewes H.-W."/>
            <person name="Kleine K."/>
        </authorList>
    </citation>
    <scope>NUCLEOTIDE SEQUENCE [LARGE SCALE GENOMIC DNA]</scope>
    <source>
        <strain>ATCC 204508 / S288c</strain>
    </source>
</reference>
<reference key="2">
    <citation type="journal article" date="2014" name="G3 (Bethesda)">
        <title>The reference genome sequence of Saccharomyces cerevisiae: Then and now.</title>
        <authorList>
            <person name="Engel S.R."/>
            <person name="Dietrich F.S."/>
            <person name="Fisk D.G."/>
            <person name="Binkley G."/>
            <person name="Balakrishnan R."/>
            <person name="Costanzo M.C."/>
            <person name="Dwight S.S."/>
            <person name="Hitz B.C."/>
            <person name="Karra K."/>
            <person name="Nash R.S."/>
            <person name="Weng S."/>
            <person name="Wong E.D."/>
            <person name="Lloyd P."/>
            <person name="Skrzypek M.S."/>
            <person name="Miyasato S.R."/>
            <person name="Simison M."/>
            <person name="Cherry J.M."/>
        </authorList>
    </citation>
    <scope>GENOME REANNOTATION</scope>
    <source>
        <strain>ATCC 204508 / S288c</strain>
    </source>
</reference>
<reference key="3">
    <citation type="journal article" date="2006" name="Proc. Natl. Acad. Sci. U.S.A.">
        <title>A global topology map of the Saccharomyces cerevisiae membrane proteome.</title>
        <authorList>
            <person name="Kim H."/>
            <person name="Melen K."/>
            <person name="Oesterberg M."/>
            <person name="von Heijne G."/>
        </authorList>
    </citation>
    <scope>TOPOLOGY [LARGE SCALE ANALYSIS]</scope>
    <source>
        <strain>ATCC 208353 / W303-1A</strain>
    </source>
</reference>
<sequence length="379" mass="45165">MKENELKNEKSVDVLSFKQLESQKIVLPQDLFRSSFTWFCYEIYKSLAFRIWMLLWLPLSVWWKLSNNCIYPLIVSLLVLFLGPIFVLVICGLSRKRSLSKQLIQFCKEITENTPSSDPHDWEVVAANLNSYLYENNVWNTKYFFFNAMVCQEAFRTTLLEPFSLKKDKAAKVKSFKDSVPYIEEALGVYFTEVEKQWKLFNTEKSWSPVGLEDAKLPKEAYRFKLTWFLKRISNIFMLIPFLNFLCCIYVSRGMCLLLRTLYLGWILFMLVQGFQNIRVLIMSMEHKMQFLSTIINEQESGANGWDEIARKMNRYLFEKKAWKNEEFFFDGIDCEWFFNHFFYRVLSAKKSMWPLPLNVELWPYIKEAQLSRSEVLLV</sequence>
<evidence type="ECO:0000255" key="1"/>
<evidence type="ECO:0000305" key="2"/>
<protein>
    <recommendedName>
        <fullName>Protein COS2</fullName>
    </recommendedName>
</protein>
<keyword id="KW-0472">Membrane</keyword>
<keyword id="KW-1185">Reference proteome</keyword>
<keyword id="KW-0812">Transmembrane</keyword>
<keyword id="KW-1133">Transmembrane helix</keyword>
<dbReference type="EMBL" id="Z36171">
    <property type="protein sequence ID" value="CAA85267.1"/>
    <property type="molecule type" value="Genomic_DNA"/>
</dbReference>
<dbReference type="EMBL" id="BK006936">
    <property type="protein sequence ID" value="DAA07417.1"/>
    <property type="molecule type" value="Genomic_DNA"/>
</dbReference>
<dbReference type="PIR" id="S46187">
    <property type="entry name" value="S46187"/>
</dbReference>
<dbReference type="RefSeq" id="NP_009861.1">
    <property type="nucleotide sequence ID" value="NM_001178650.1"/>
</dbReference>
<dbReference type="BioGRID" id="32994">
    <property type="interactions" value="2"/>
</dbReference>
<dbReference type="BioGRID" id="35073">
    <property type="interactions" value="12"/>
</dbReference>
<dbReference type="FunCoup" id="P0CX12">
    <property type="interactions" value="58"/>
</dbReference>
<dbReference type="STRING" id="4932.YBR302C"/>
<dbReference type="iPTMnet" id="P0CX12"/>
<dbReference type="PaxDb" id="4932-YBR302C"/>
<dbReference type="PeptideAtlas" id="P0CX12"/>
<dbReference type="EnsemblFungi" id="YBR302C_mRNA">
    <property type="protein sequence ID" value="YBR302C"/>
    <property type="gene ID" value="YBR302C"/>
</dbReference>
<dbReference type="EnsemblFungi" id="YML132W_mRNA">
    <property type="protein sequence ID" value="YML132W"/>
    <property type="gene ID" value="YML132W"/>
</dbReference>
<dbReference type="GeneID" id="852605"/>
<dbReference type="KEGG" id="sce:YBR302C"/>
<dbReference type="KEGG" id="sce:YML132W"/>
<dbReference type="AGR" id="SGD:S000000506"/>
<dbReference type="SGD" id="S000000506">
    <property type="gene designation" value="COS2"/>
</dbReference>
<dbReference type="VEuPathDB" id="FungiDB:YBR302C"/>
<dbReference type="VEuPathDB" id="FungiDB:YML132W"/>
<dbReference type="eggNOG" id="ENOG502SAGH">
    <property type="taxonomic scope" value="Eukaryota"/>
</dbReference>
<dbReference type="HOGENOM" id="CLU_062892_1_0_1"/>
<dbReference type="InParanoid" id="P0CX12"/>
<dbReference type="OMA" id="CVITWVA"/>
<dbReference type="OrthoDB" id="4039705at2759"/>
<dbReference type="BioCyc" id="YEAST:G3O-29218-MONOMER"/>
<dbReference type="PRO" id="PR:P0CX12"/>
<dbReference type="Proteomes" id="UP000002311">
    <property type="component" value="Chromosome II"/>
</dbReference>
<dbReference type="RNAct" id="P0CX12">
    <property type="molecule type" value="protein"/>
</dbReference>
<dbReference type="ExpressionAtlas" id="P0CX12">
    <property type="expression patterns" value="baseline and differential"/>
</dbReference>
<dbReference type="GO" id="GO:0005768">
    <property type="term" value="C:endosome"/>
    <property type="evidence" value="ECO:0000314"/>
    <property type="project" value="SGD"/>
</dbReference>
<dbReference type="GO" id="GO:0000324">
    <property type="term" value="C:fungal-type vacuole"/>
    <property type="evidence" value="ECO:0007005"/>
    <property type="project" value="SGD"/>
</dbReference>
<dbReference type="GO" id="GO:0016020">
    <property type="term" value="C:membrane"/>
    <property type="evidence" value="ECO:0007669"/>
    <property type="project" value="UniProtKB-SubCell"/>
</dbReference>
<dbReference type="GO" id="GO:0043328">
    <property type="term" value="P:protein transport to vacuole involved in ubiquitin-dependent protein catabolic process via the multivesicular body sorting pathway"/>
    <property type="evidence" value="ECO:0000250"/>
    <property type="project" value="SGD"/>
</dbReference>
<dbReference type="InterPro" id="IPR001142">
    <property type="entry name" value="DUP/COS"/>
</dbReference>
<dbReference type="Pfam" id="PF00674">
    <property type="entry name" value="DUP"/>
    <property type="match status" value="2"/>
</dbReference>
<accession>P0CX12</accession>
<accession>D6VQU7</accession>
<accession>P38363</accession>
<gene>
    <name type="primary">COS2</name>
    <name type="ordered locus">YBR302C</name>
    <name type="ORF">YBR2121</name>
</gene>
<proteinExistence type="evidence at protein level"/>
<name>COS2_YEAST</name>
<organism>
    <name type="scientific">Saccharomyces cerevisiae (strain ATCC 204508 / S288c)</name>
    <name type="common">Baker's yeast</name>
    <dbReference type="NCBI Taxonomy" id="559292"/>
    <lineage>
        <taxon>Eukaryota</taxon>
        <taxon>Fungi</taxon>
        <taxon>Dikarya</taxon>
        <taxon>Ascomycota</taxon>
        <taxon>Saccharomycotina</taxon>
        <taxon>Saccharomycetes</taxon>
        <taxon>Saccharomycetales</taxon>
        <taxon>Saccharomycetaceae</taxon>
        <taxon>Saccharomyces</taxon>
    </lineage>
</organism>
<comment type="subcellular location">
    <subcellularLocation>
        <location>Membrane</location>
        <topology>Multi-pass membrane protein</topology>
    </subcellularLocation>
</comment>
<comment type="similarity">
    <text evidence="2">Belongs to the DUP/COS family.</text>
</comment>
<feature type="chain" id="PRO_0000207514" description="Protein COS2">
    <location>
        <begin position="1"/>
        <end position="379"/>
    </location>
</feature>
<feature type="topological domain" description="Cytoplasmic" evidence="1">
    <location>
        <begin position="1"/>
        <end position="72"/>
    </location>
</feature>
<feature type="transmembrane region" description="Helical" evidence="1">
    <location>
        <begin position="73"/>
        <end position="93"/>
    </location>
</feature>
<feature type="topological domain" description="Extracellular" evidence="1">
    <location>
        <begin position="94"/>
        <end position="254"/>
    </location>
</feature>
<feature type="transmembrane region" description="Helical" evidence="1">
    <location>
        <begin position="255"/>
        <end position="275"/>
    </location>
</feature>
<feature type="topological domain" description="Cytoplasmic" evidence="1">
    <location>
        <begin position="276"/>
        <end position="379"/>
    </location>
</feature>